<sequence>MSKSESPKEPEQLRKLFIGGLSFETTDESLRSHFEQWGTLTDCVVMRDPNTKRSRGFGFVTYATVEEVDAAMNARPHKVDGRVVEPKRAVSREDSQRPDAHLTVKKIFVGGIKEDTEEHHLRDYFEQYGKIEVIEIMTDRGSGKKRGFAFVTFDDHDSVDKIVIQKYHTVNGHNCEVRKALSKQEMASASSSQRGRSGSGNFGGGRGGGFGGNDNFGRGGNFSGRGGFGGSRGGGGYGGSGDGYNGFGNDGSNFGGGGSYNDFGNYNNQSSNFGPMKGGNFEGRSSGPHGGGGQYFAKPRNQGGYGGSSSSSSYGSGRRF</sequence>
<evidence type="ECO:0000255" key="1">
    <source>
        <dbReference type="PROSITE-ProRule" id="PRU00176"/>
    </source>
</evidence>
<evidence type="ECO:0000256" key="2">
    <source>
        <dbReference type="SAM" id="MobiDB-lite"/>
    </source>
</evidence>
<evidence type="ECO:0000305" key="3"/>
<evidence type="ECO:0000312" key="4">
    <source>
        <dbReference type="HGNC" id="HGNC:48778"/>
    </source>
</evidence>
<gene>
    <name evidence="4" type="primary">HNRNPA1L3</name>
    <name evidence="4" type="synonym">HNRNPA1P48</name>
</gene>
<keyword id="KW-1267">Proteomics identification</keyword>
<keyword id="KW-1185">Reference proteome</keyword>
<keyword id="KW-0677">Repeat</keyword>
<keyword id="KW-0694">RNA-binding</keyword>
<reference key="1">
    <citation type="journal article" date="2004" name="Nature">
        <title>The sequence and analysis of duplication-rich human chromosome 16.</title>
        <authorList>
            <person name="Martin J."/>
            <person name="Han C."/>
            <person name="Gordon L.A."/>
            <person name="Terry A."/>
            <person name="Prabhakar S."/>
            <person name="She X."/>
            <person name="Xie G."/>
            <person name="Hellsten U."/>
            <person name="Chan Y.M."/>
            <person name="Altherr M."/>
            <person name="Couronne O."/>
            <person name="Aerts A."/>
            <person name="Bajorek E."/>
            <person name="Black S."/>
            <person name="Blumer H."/>
            <person name="Branscomb E."/>
            <person name="Brown N.C."/>
            <person name="Bruno W.J."/>
            <person name="Buckingham J.M."/>
            <person name="Callen D.F."/>
            <person name="Campbell C.S."/>
            <person name="Campbell M.L."/>
            <person name="Campbell E.W."/>
            <person name="Caoile C."/>
            <person name="Challacombe J.F."/>
            <person name="Chasteen L.A."/>
            <person name="Chertkov O."/>
            <person name="Chi H.C."/>
            <person name="Christensen M."/>
            <person name="Clark L.M."/>
            <person name="Cohn J.D."/>
            <person name="Denys M."/>
            <person name="Detter J.C."/>
            <person name="Dickson M."/>
            <person name="Dimitrijevic-Bussod M."/>
            <person name="Escobar J."/>
            <person name="Fawcett J.J."/>
            <person name="Flowers D."/>
            <person name="Fotopulos D."/>
            <person name="Glavina T."/>
            <person name="Gomez M."/>
            <person name="Gonzales E."/>
            <person name="Goodstein D."/>
            <person name="Goodwin L.A."/>
            <person name="Grady D.L."/>
            <person name="Grigoriev I."/>
            <person name="Groza M."/>
            <person name="Hammon N."/>
            <person name="Hawkins T."/>
            <person name="Haydu L."/>
            <person name="Hildebrand C.E."/>
            <person name="Huang W."/>
            <person name="Israni S."/>
            <person name="Jett J."/>
            <person name="Jewett P.B."/>
            <person name="Kadner K."/>
            <person name="Kimball H."/>
            <person name="Kobayashi A."/>
            <person name="Krawczyk M.-C."/>
            <person name="Leyba T."/>
            <person name="Longmire J.L."/>
            <person name="Lopez F."/>
            <person name="Lou Y."/>
            <person name="Lowry S."/>
            <person name="Ludeman T."/>
            <person name="Manohar C.F."/>
            <person name="Mark G.A."/>
            <person name="McMurray K.L."/>
            <person name="Meincke L.J."/>
            <person name="Morgan J."/>
            <person name="Moyzis R.K."/>
            <person name="Mundt M.O."/>
            <person name="Munk A.C."/>
            <person name="Nandkeshwar R.D."/>
            <person name="Pitluck S."/>
            <person name="Pollard M."/>
            <person name="Predki P."/>
            <person name="Parson-Quintana B."/>
            <person name="Ramirez L."/>
            <person name="Rash S."/>
            <person name="Retterer J."/>
            <person name="Ricke D.O."/>
            <person name="Robinson D.L."/>
            <person name="Rodriguez A."/>
            <person name="Salamov A."/>
            <person name="Saunders E.H."/>
            <person name="Scott D."/>
            <person name="Shough T."/>
            <person name="Stallings R.L."/>
            <person name="Stalvey M."/>
            <person name="Sutherland R.D."/>
            <person name="Tapia R."/>
            <person name="Tesmer J.G."/>
            <person name="Thayer N."/>
            <person name="Thompson L.S."/>
            <person name="Tice H."/>
            <person name="Torney D.C."/>
            <person name="Tran-Gyamfi M."/>
            <person name="Tsai M."/>
            <person name="Ulanovsky L.E."/>
            <person name="Ustaszewska A."/>
            <person name="Vo N."/>
            <person name="White P.S."/>
            <person name="Williams A.L."/>
            <person name="Wills P.L."/>
            <person name="Wu J.-R."/>
            <person name="Wu K."/>
            <person name="Yang J."/>
            <person name="DeJong P."/>
            <person name="Bruce D."/>
            <person name="Doggett N.A."/>
            <person name="Deaven L."/>
            <person name="Schmutz J."/>
            <person name="Grimwood J."/>
            <person name="Richardson P."/>
            <person name="Rokhsar D.S."/>
            <person name="Eichler E.E."/>
            <person name="Gilna P."/>
            <person name="Lucas S.M."/>
            <person name="Myers R.M."/>
            <person name="Rubin E.M."/>
            <person name="Pennacchio L.A."/>
        </authorList>
    </citation>
    <scope>NUCLEOTIDE SEQUENCE [LARGE SCALE GENOMIC DNA]</scope>
</reference>
<dbReference type="EMBL" id="AC084058">
    <property type="status" value="NOT_ANNOTATED_CDS"/>
    <property type="molecule type" value="Genomic_DNA"/>
</dbReference>
<dbReference type="CCDS" id="CCDS92159.1"/>
<dbReference type="RefSeq" id="NP_001383170.1">
    <property type="nucleotide sequence ID" value="NM_001396241.1"/>
</dbReference>
<dbReference type="SMR" id="A0A2R8Y4L2"/>
<dbReference type="STRING" id="9606.ENSP00000493805"/>
<dbReference type="jPOST" id="A0A2R8Y4L2"/>
<dbReference type="MassIVE" id="A0A2R8Y4L2"/>
<dbReference type="PeptideAtlas" id="A0A2R8Y4L2"/>
<dbReference type="Ensembl" id="ENST00000565308.3">
    <property type="protein sequence ID" value="ENSP00000493805.2"/>
    <property type="gene ID" value="ENSG00000224578.5"/>
</dbReference>
<dbReference type="Ensembl" id="ENST00000698152.1">
    <property type="protein sequence ID" value="ENSP00000513590.2"/>
    <property type="gene ID" value="ENSG00000224578.5"/>
</dbReference>
<dbReference type="GeneID" id="642659"/>
<dbReference type="MANE-Select" id="ENST00000698152.1">
    <property type="protein sequence ID" value="ENSP00000513590.2"/>
    <property type="RefSeq nucleotide sequence ID" value="NM_001396241.1"/>
    <property type="RefSeq protein sequence ID" value="NP_001383170.1"/>
</dbReference>
<dbReference type="AGR" id="HGNC:48778"/>
<dbReference type="GeneCards" id="HNRNPA1L3"/>
<dbReference type="HGNC" id="HGNC:48778">
    <property type="gene designation" value="HNRNPA1L3"/>
</dbReference>
<dbReference type="HPA" id="ENSG00000224578">
    <property type="expression patterns" value="Low tissue specificity"/>
</dbReference>
<dbReference type="VEuPathDB" id="HostDB:ENSG00000224578"/>
<dbReference type="GeneTree" id="ENSGT00950000183123"/>
<dbReference type="InParanoid" id="A0A2R8Y4L2"/>
<dbReference type="OrthoDB" id="6019873at2759"/>
<dbReference type="PAN-GO" id="A0A2R8Y4L2">
    <property type="GO annotations" value="0 GO annotations based on evolutionary models"/>
</dbReference>
<dbReference type="ChiTaRS" id="HNRNPA1P48">
    <property type="organism name" value="human"/>
</dbReference>
<dbReference type="PRO" id="PR:A0A2R8Y4L2"/>
<dbReference type="Proteomes" id="UP000005640">
    <property type="component" value="Chromosome 16"/>
</dbReference>
<dbReference type="Bgee" id="ENSG00000224578">
    <property type="expression patterns" value="Expressed in ganglionic eminence and 106 other cell types or tissues"/>
</dbReference>
<dbReference type="GO" id="GO:0071013">
    <property type="term" value="C:catalytic step 2 spliceosome"/>
    <property type="evidence" value="ECO:0000318"/>
    <property type="project" value="GO_Central"/>
</dbReference>
<dbReference type="GO" id="GO:0003723">
    <property type="term" value="F:RNA binding"/>
    <property type="evidence" value="ECO:0007669"/>
    <property type="project" value="UniProtKB-KW"/>
</dbReference>
<dbReference type="GO" id="GO:0000398">
    <property type="term" value="P:mRNA splicing, via spliceosome"/>
    <property type="evidence" value="ECO:0000318"/>
    <property type="project" value="GO_Central"/>
</dbReference>
<dbReference type="CDD" id="cd12761">
    <property type="entry name" value="RRM1_hnRNPA1"/>
    <property type="match status" value="1"/>
</dbReference>
<dbReference type="CDD" id="cd12582">
    <property type="entry name" value="RRM2_hnRNPA3"/>
    <property type="match status" value="1"/>
</dbReference>
<dbReference type="FunFam" id="3.30.70.330:FF:000048">
    <property type="entry name" value="Heterogeneous nuclear ribonucleoprotein a1 isoform"/>
    <property type="match status" value="1"/>
</dbReference>
<dbReference type="FunFam" id="3.30.70.330:FF:000429">
    <property type="entry name" value="Heterogeneous nuclear ribonucleoprotein A1-like 2"/>
    <property type="match status" value="1"/>
</dbReference>
<dbReference type="Gene3D" id="3.30.70.330">
    <property type="match status" value="2"/>
</dbReference>
<dbReference type="InterPro" id="IPR034516">
    <property type="entry name" value="hnRNPA1/3_RRM2"/>
</dbReference>
<dbReference type="InterPro" id="IPR021662">
    <property type="entry name" value="HnRNPA1/A2_C"/>
</dbReference>
<dbReference type="InterPro" id="IPR034845">
    <property type="entry name" value="hnRNPA1_RRM1"/>
</dbReference>
<dbReference type="InterPro" id="IPR012677">
    <property type="entry name" value="Nucleotide-bd_a/b_plait_sf"/>
</dbReference>
<dbReference type="InterPro" id="IPR035979">
    <property type="entry name" value="RBD_domain_sf"/>
</dbReference>
<dbReference type="InterPro" id="IPR000504">
    <property type="entry name" value="RRM_dom"/>
</dbReference>
<dbReference type="PANTHER" id="PTHR48026:SF2">
    <property type="entry name" value="HETEROGENEOUS NUCLEAR RIBONUCLEOPROTEIN A1-RELATED"/>
    <property type="match status" value="1"/>
</dbReference>
<dbReference type="PANTHER" id="PTHR48026">
    <property type="entry name" value="HOMOLOGOUS TO DROSOPHILA SQD (SQUID) PROTEIN"/>
    <property type="match status" value="1"/>
</dbReference>
<dbReference type="Pfam" id="PF11627">
    <property type="entry name" value="HnRNPA1_LC"/>
    <property type="match status" value="1"/>
</dbReference>
<dbReference type="Pfam" id="PF00076">
    <property type="entry name" value="RRM_1"/>
    <property type="match status" value="2"/>
</dbReference>
<dbReference type="SMART" id="SM00360">
    <property type="entry name" value="RRM"/>
    <property type="match status" value="2"/>
</dbReference>
<dbReference type="SUPFAM" id="SSF54928">
    <property type="entry name" value="RNA-binding domain, RBD"/>
    <property type="match status" value="2"/>
</dbReference>
<dbReference type="PROSITE" id="PS50102">
    <property type="entry name" value="RRM"/>
    <property type="match status" value="2"/>
</dbReference>
<proteinExistence type="evidence at protein level"/>
<name>RA1L3_HUMAN</name>
<protein>
    <recommendedName>
        <fullName evidence="3">Heterogeneous nuclear ribonucleoprotein A1-like 3</fullName>
    </recommendedName>
    <alternativeName>
        <fullName evidence="4">Heterogeneous nuclear ribonucleoprotein A1 pseudogene 48</fullName>
    </alternativeName>
</protein>
<organism>
    <name type="scientific">Homo sapiens</name>
    <name type="common">Human</name>
    <dbReference type="NCBI Taxonomy" id="9606"/>
    <lineage>
        <taxon>Eukaryota</taxon>
        <taxon>Metazoa</taxon>
        <taxon>Chordata</taxon>
        <taxon>Craniata</taxon>
        <taxon>Vertebrata</taxon>
        <taxon>Euteleostomi</taxon>
        <taxon>Mammalia</taxon>
        <taxon>Eutheria</taxon>
        <taxon>Euarchontoglires</taxon>
        <taxon>Primates</taxon>
        <taxon>Haplorrhini</taxon>
        <taxon>Catarrhini</taxon>
        <taxon>Hominidae</taxon>
        <taxon>Homo</taxon>
    </lineage>
</organism>
<feature type="chain" id="PRO_0000454745" description="Heterogeneous nuclear ribonucleoprotein A1-like 3">
    <location>
        <begin position="1"/>
        <end position="320"/>
    </location>
</feature>
<feature type="domain" description="RRM 1" evidence="1">
    <location>
        <begin position="14"/>
        <end position="97"/>
    </location>
</feature>
<feature type="domain" description="RRM 2" evidence="1">
    <location>
        <begin position="105"/>
        <end position="184"/>
    </location>
</feature>
<feature type="region of interest" description="Disordered" evidence="2">
    <location>
        <begin position="182"/>
        <end position="218"/>
    </location>
</feature>
<feature type="region of interest" description="Disordered" evidence="2">
    <location>
        <begin position="271"/>
        <end position="320"/>
    </location>
</feature>
<feature type="compositionally biased region" description="Gly residues" evidence="2">
    <location>
        <begin position="197"/>
        <end position="218"/>
    </location>
</feature>
<feature type="compositionally biased region" description="Low complexity" evidence="2">
    <location>
        <begin position="308"/>
        <end position="320"/>
    </location>
</feature>
<accession>A0A2R8Y4L2</accession>